<accession>B7M208</accession>
<feature type="chain" id="PRO_1000137240" description="UPF0294 protein YafD">
    <location>
        <begin position="1"/>
        <end position="266"/>
    </location>
</feature>
<evidence type="ECO:0000255" key="1">
    <source>
        <dbReference type="HAMAP-Rule" id="MF_01119"/>
    </source>
</evidence>
<gene>
    <name evidence="1" type="primary">yafD</name>
    <name type="ordered locus">ECIAI1_0217</name>
</gene>
<organism>
    <name type="scientific">Escherichia coli O8 (strain IAI1)</name>
    <dbReference type="NCBI Taxonomy" id="585034"/>
    <lineage>
        <taxon>Bacteria</taxon>
        <taxon>Pseudomonadati</taxon>
        <taxon>Pseudomonadota</taxon>
        <taxon>Gammaproteobacteria</taxon>
        <taxon>Enterobacterales</taxon>
        <taxon>Enterobacteriaceae</taxon>
        <taxon>Escherichia</taxon>
    </lineage>
</organism>
<sequence>MRKNTYAMRYVAGQPAERILPPGSFASIGQALPPGEPLSTEERIRILVWNIYKQQRAEWLSVLKNYGKDAHLVLLQEAQTTPELVQFATANYLAADQVPAFVLPQHPSGVMTLSAAHPVYCCPLREREPILRLAKSALVTVYPLPDTRLLMVVNIHAVNFSLGVDVYSKQLLPIGDQIAHHSGPVIMAGDFNAWSRRRMNALYRFAREMSLRQVRFTDDQRRRAFGRPLDFVFYRGLNVSEASVLVTRASDHNPLLVEFSPGKPDK</sequence>
<proteinExistence type="inferred from homology"/>
<name>YAFD_ECO8A</name>
<keyword id="KW-0963">Cytoplasm</keyword>
<reference key="1">
    <citation type="journal article" date="2009" name="PLoS Genet.">
        <title>Organised genome dynamics in the Escherichia coli species results in highly diverse adaptive paths.</title>
        <authorList>
            <person name="Touchon M."/>
            <person name="Hoede C."/>
            <person name="Tenaillon O."/>
            <person name="Barbe V."/>
            <person name="Baeriswyl S."/>
            <person name="Bidet P."/>
            <person name="Bingen E."/>
            <person name="Bonacorsi S."/>
            <person name="Bouchier C."/>
            <person name="Bouvet O."/>
            <person name="Calteau A."/>
            <person name="Chiapello H."/>
            <person name="Clermont O."/>
            <person name="Cruveiller S."/>
            <person name="Danchin A."/>
            <person name="Diard M."/>
            <person name="Dossat C."/>
            <person name="Karoui M.E."/>
            <person name="Frapy E."/>
            <person name="Garry L."/>
            <person name="Ghigo J.M."/>
            <person name="Gilles A.M."/>
            <person name="Johnson J."/>
            <person name="Le Bouguenec C."/>
            <person name="Lescat M."/>
            <person name="Mangenot S."/>
            <person name="Martinez-Jehanne V."/>
            <person name="Matic I."/>
            <person name="Nassif X."/>
            <person name="Oztas S."/>
            <person name="Petit M.A."/>
            <person name="Pichon C."/>
            <person name="Rouy Z."/>
            <person name="Ruf C.S."/>
            <person name="Schneider D."/>
            <person name="Tourret J."/>
            <person name="Vacherie B."/>
            <person name="Vallenet D."/>
            <person name="Medigue C."/>
            <person name="Rocha E.P.C."/>
            <person name="Denamur E."/>
        </authorList>
    </citation>
    <scope>NUCLEOTIDE SEQUENCE [LARGE SCALE GENOMIC DNA]</scope>
    <source>
        <strain>IAI1</strain>
    </source>
</reference>
<comment type="subcellular location">
    <subcellularLocation>
        <location evidence="1">Cytoplasm</location>
    </subcellularLocation>
</comment>
<comment type="similarity">
    <text evidence="1">Belongs to the UPF0294 family.</text>
</comment>
<protein>
    <recommendedName>
        <fullName evidence="1">UPF0294 protein YafD</fullName>
    </recommendedName>
</protein>
<dbReference type="EMBL" id="CU928160">
    <property type="protein sequence ID" value="CAQ97092.1"/>
    <property type="molecule type" value="Genomic_DNA"/>
</dbReference>
<dbReference type="RefSeq" id="WP_001230983.1">
    <property type="nucleotide sequence ID" value="NC_011741.1"/>
</dbReference>
<dbReference type="SMR" id="B7M208"/>
<dbReference type="KEGG" id="ecr:ECIAI1_0217"/>
<dbReference type="HOGENOM" id="CLU_083563_0_0_6"/>
<dbReference type="GO" id="GO:0005737">
    <property type="term" value="C:cytoplasm"/>
    <property type="evidence" value="ECO:0007669"/>
    <property type="project" value="UniProtKB-SubCell"/>
</dbReference>
<dbReference type="GO" id="GO:0003824">
    <property type="term" value="F:catalytic activity"/>
    <property type="evidence" value="ECO:0007669"/>
    <property type="project" value="InterPro"/>
</dbReference>
<dbReference type="Gene3D" id="3.60.10.10">
    <property type="entry name" value="Endonuclease/exonuclease/phosphatase"/>
    <property type="match status" value="1"/>
</dbReference>
<dbReference type="HAMAP" id="MF_01119">
    <property type="entry name" value="UPF0294"/>
    <property type="match status" value="1"/>
</dbReference>
<dbReference type="InterPro" id="IPR036691">
    <property type="entry name" value="Endo/exonu/phosph_ase_sf"/>
</dbReference>
<dbReference type="InterPro" id="IPR005135">
    <property type="entry name" value="Endo/exonuclease/phosphatase"/>
</dbReference>
<dbReference type="InterPro" id="IPR022958">
    <property type="entry name" value="UPF0294"/>
</dbReference>
<dbReference type="NCBIfam" id="NF003839">
    <property type="entry name" value="PRK05421.1-1"/>
    <property type="match status" value="1"/>
</dbReference>
<dbReference type="NCBIfam" id="NF003840">
    <property type="entry name" value="PRK05421.1-2"/>
    <property type="match status" value="1"/>
</dbReference>
<dbReference type="NCBIfam" id="NF003841">
    <property type="entry name" value="PRK05421.1-3"/>
    <property type="match status" value="1"/>
</dbReference>
<dbReference type="NCBIfam" id="NF003842">
    <property type="entry name" value="PRK05421.1-4"/>
    <property type="match status" value="1"/>
</dbReference>
<dbReference type="Pfam" id="PF03372">
    <property type="entry name" value="Exo_endo_phos"/>
    <property type="match status" value="1"/>
</dbReference>
<dbReference type="SUPFAM" id="SSF56219">
    <property type="entry name" value="DNase I-like"/>
    <property type="match status" value="1"/>
</dbReference>